<organism>
    <name type="scientific">Staphylococcus aureus (strain N315)</name>
    <dbReference type="NCBI Taxonomy" id="158879"/>
    <lineage>
        <taxon>Bacteria</taxon>
        <taxon>Bacillati</taxon>
        <taxon>Bacillota</taxon>
        <taxon>Bacilli</taxon>
        <taxon>Bacillales</taxon>
        <taxon>Staphylococcaceae</taxon>
        <taxon>Staphylococcus</taxon>
    </lineage>
</organism>
<accession>P60219</accession>
<accession>Q99TZ7</accession>
<protein>
    <recommendedName>
        <fullName evidence="1">Segregation and condensation protein B</fullName>
    </recommendedName>
</protein>
<sequence length="180" mass="20206">MDNHGILESLLFTAGDEGLDEKQLLEILDMSKDQLVELIENYSSHGLMIQRFGTTYVLTTKKEAATYIEQLIEQKSQMKLSQAAMEVLSIIAYNQPLSRSDIELIRSINSDGAVKTLIAKGLVEAKVVNEQRSQQLITTDLFLNVFGISNIEDLPTTEEDDEEMDAFFSNLVNQKGENND</sequence>
<comment type="function">
    <text evidence="1">Participates in chromosomal partition during cell division. May act via the formation of a condensin-like complex containing Smc and ScpA that pull DNA away from mid-cell into both cell halves.</text>
</comment>
<comment type="subunit">
    <text evidence="1">Homodimer. Homodimerization may be required to stabilize the binding of ScpA to the Smc head domains. Component of a cohesin-like complex composed of ScpA, ScpB and the Smc homodimer, in which ScpA and ScpB bind to the head domain of Smc. The presence of the three proteins is required for the association of the complex with DNA.</text>
</comment>
<comment type="subcellular location">
    <subcellularLocation>
        <location evidence="1">Cytoplasm</location>
    </subcellularLocation>
    <text evidence="1">Associated with two foci at the outer edges of the nucleoid region in young cells, and at four foci within both cell halves in older cells.</text>
</comment>
<comment type="similarity">
    <text evidence="1">Belongs to the ScpB family.</text>
</comment>
<reference key="1">
    <citation type="journal article" date="2001" name="Lancet">
        <title>Whole genome sequencing of meticillin-resistant Staphylococcus aureus.</title>
        <authorList>
            <person name="Kuroda M."/>
            <person name="Ohta T."/>
            <person name="Uchiyama I."/>
            <person name="Baba T."/>
            <person name="Yuzawa H."/>
            <person name="Kobayashi I."/>
            <person name="Cui L."/>
            <person name="Oguchi A."/>
            <person name="Aoki K."/>
            <person name="Nagai Y."/>
            <person name="Lian J.-Q."/>
            <person name="Ito T."/>
            <person name="Kanamori M."/>
            <person name="Matsumaru H."/>
            <person name="Maruyama A."/>
            <person name="Murakami H."/>
            <person name="Hosoyama A."/>
            <person name="Mizutani-Ui Y."/>
            <person name="Takahashi N.K."/>
            <person name="Sawano T."/>
            <person name="Inoue R."/>
            <person name="Kaito C."/>
            <person name="Sekimizu K."/>
            <person name="Hirakawa H."/>
            <person name="Kuhara S."/>
            <person name="Goto S."/>
            <person name="Yabuzaki J."/>
            <person name="Kanehisa M."/>
            <person name="Yamashita A."/>
            <person name="Oshima K."/>
            <person name="Furuya K."/>
            <person name="Yoshino C."/>
            <person name="Shiba T."/>
            <person name="Hattori M."/>
            <person name="Ogasawara N."/>
            <person name="Hayashi H."/>
            <person name="Hiramatsu K."/>
        </authorList>
    </citation>
    <scope>NUCLEOTIDE SEQUENCE [LARGE SCALE GENOMIC DNA]</scope>
    <source>
        <strain>N315</strain>
    </source>
</reference>
<feature type="chain" id="PRO_0000211147" description="Segregation and condensation protein B">
    <location>
        <begin position="1"/>
        <end position="180"/>
    </location>
</feature>
<gene>
    <name evidence="1" type="primary">scpB</name>
    <name type="ordered locus">SA1325</name>
</gene>
<name>SCPB_STAAN</name>
<evidence type="ECO:0000255" key="1">
    <source>
        <dbReference type="HAMAP-Rule" id="MF_01804"/>
    </source>
</evidence>
<keyword id="KW-0131">Cell cycle</keyword>
<keyword id="KW-0132">Cell division</keyword>
<keyword id="KW-0159">Chromosome partition</keyword>
<keyword id="KW-0963">Cytoplasm</keyword>
<proteinExistence type="inferred from homology"/>
<dbReference type="EMBL" id="BA000018">
    <property type="protein sequence ID" value="BAB42587.1"/>
    <property type="molecule type" value="Genomic_DNA"/>
</dbReference>
<dbReference type="PIR" id="F89928">
    <property type="entry name" value="F89928"/>
</dbReference>
<dbReference type="RefSeq" id="WP_000368656.1">
    <property type="nucleotide sequence ID" value="NC_002745.2"/>
</dbReference>
<dbReference type="SMR" id="P60219"/>
<dbReference type="EnsemblBacteria" id="BAB42587">
    <property type="protein sequence ID" value="BAB42587"/>
    <property type="gene ID" value="BAB42587"/>
</dbReference>
<dbReference type="KEGG" id="sau:SA1325"/>
<dbReference type="HOGENOM" id="CLU_045647_5_3_9"/>
<dbReference type="GO" id="GO:0005737">
    <property type="term" value="C:cytoplasm"/>
    <property type="evidence" value="ECO:0007669"/>
    <property type="project" value="UniProtKB-SubCell"/>
</dbReference>
<dbReference type="GO" id="GO:0051301">
    <property type="term" value="P:cell division"/>
    <property type="evidence" value="ECO:0007669"/>
    <property type="project" value="UniProtKB-KW"/>
</dbReference>
<dbReference type="GO" id="GO:0051304">
    <property type="term" value="P:chromosome separation"/>
    <property type="evidence" value="ECO:0007669"/>
    <property type="project" value="InterPro"/>
</dbReference>
<dbReference type="GO" id="GO:0006260">
    <property type="term" value="P:DNA replication"/>
    <property type="evidence" value="ECO:0007669"/>
    <property type="project" value="UniProtKB-UniRule"/>
</dbReference>
<dbReference type="Gene3D" id="1.10.10.10">
    <property type="entry name" value="Winged helix-like DNA-binding domain superfamily/Winged helix DNA-binding domain"/>
    <property type="match status" value="2"/>
</dbReference>
<dbReference type="HAMAP" id="MF_01804">
    <property type="entry name" value="ScpB"/>
    <property type="match status" value="1"/>
</dbReference>
<dbReference type="InterPro" id="IPR005234">
    <property type="entry name" value="ScpB_csome_segregation"/>
</dbReference>
<dbReference type="InterPro" id="IPR036388">
    <property type="entry name" value="WH-like_DNA-bd_sf"/>
</dbReference>
<dbReference type="InterPro" id="IPR036390">
    <property type="entry name" value="WH_DNA-bd_sf"/>
</dbReference>
<dbReference type="NCBIfam" id="TIGR00281">
    <property type="entry name" value="SMC-Scp complex subunit ScpB"/>
    <property type="match status" value="1"/>
</dbReference>
<dbReference type="PANTHER" id="PTHR34298">
    <property type="entry name" value="SEGREGATION AND CONDENSATION PROTEIN B"/>
    <property type="match status" value="1"/>
</dbReference>
<dbReference type="PANTHER" id="PTHR34298:SF2">
    <property type="entry name" value="SEGREGATION AND CONDENSATION PROTEIN B"/>
    <property type="match status" value="1"/>
</dbReference>
<dbReference type="Pfam" id="PF04079">
    <property type="entry name" value="SMC_ScpB"/>
    <property type="match status" value="1"/>
</dbReference>
<dbReference type="PIRSF" id="PIRSF019345">
    <property type="entry name" value="ScpB"/>
    <property type="match status" value="1"/>
</dbReference>
<dbReference type="SUPFAM" id="SSF46785">
    <property type="entry name" value="Winged helix' DNA-binding domain"/>
    <property type="match status" value="2"/>
</dbReference>